<organism>
    <name type="scientific">Treponema denticola (strain ATCC 35405 / DSM 14222 / CIP 103919 / JCM 8153 / KCTC 15104)</name>
    <dbReference type="NCBI Taxonomy" id="243275"/>
    <lineage>
        <taxon>Bacteria</taxon>
        <taxon>Pseudomonadati</taxon>
        <taxon>Spirochaetota</taxon>
        <taxon>Spirochaetia</taxon>
        <taxon>Spirochaetales</taxon>
        <taxon>Treponemataceae</taxon>
        <taxon>Treponema</taxon>
    </lineage>
</organism>
<dbReference type="EMBL" id="AE017226">
    <property type="protein sequence ID" value="AAS12914.1"/>
    <property type="molecule type" value="Genomic_DNA"/>
</dbReference>
<dbReference type="RefSeq" id="NP_972995.1">
    <property type="nucleotide sequence ID" value="NC_002967.9"/>
</dbReference>
<dbReference type="RefSeq" id="WP_002680325.1">
    <property type="nucleotide sequence ID" value="NC_002967.9"/>
</dbReference>
<dbReference type="SMR" id="Q73JM1"/>
<dbReference type="STRING" id="243275.TDE_2396"/>
<dbReference type="PaxDb" id="243275-TDE_2396"/>
<dbReference type="GeneID" id="2740698"/>
<dbReference type="KEGG" id="tde:TDE_2396"/>
<dbReference type="PATRIC" id="fig|243275.7.peg.2263"/>
<dbReference type="eggNOG" id="COG0706">
    <property type="taxonomic scope" value="Bacteria"/>
</dbReference>
<dbReference type="HOGENOM" id="CLU_016535_2_0_12"/>
<dbReference type="OrthoDB" id="9780552at2"/>
<dbReference type="Proteomes" id="UP000008212">
    <property type="component" value="Chromosome"/>
</dbReference>
<dbReference type="GO" id="GO:0005886">
    <property type="term" value="C:plasma membrane"/>
    <property type="evidence" value="ECO:0007669"/>
    <property type="project" value="UniProtKB-SubCell"/>
</dbReference>
<dbReference type="GO" id="GO:0032977">
    <property type="term" value="F:membrane insertase activity"/>
    <property type="evidence" value="ECO:0007669"/>
    <property type="project" value="InterPro"/>
</dbReference>
<dbReference type="GO" id="GO:0051205">
    <property type="term" value="P:protein insertion into membrane"/>
    <property type="evidence" value="ECO:0007669"/>
    <property type="project" value="TreeGrafter"/>
</dbReference>
<dbReference type="GO" id="GO:0015031">
    <property type="term" value="P:protein transport"/>
    <property type="evidence" value="ECO:0007669"/>
    <property type="project" value="UniProtKB-KW"/>
</dbReference>
<dbReference type="CDD" id="cd20070">
    <property type="entry name" value="5TM_YidC_Alb3"/>
    <property type="match status" value="1"/>
</dbReference>
<dbReference type="CDD" id="cd19961">
    <property type="entry name" value="EcYidC-like_peri"/>
    <property type="match status" value="1"/>
</dbReference>
<dbReference type="Gene3D" id="2.70.98.90">
    <property type="match status" value="1"/>
</dbReference>
<dbReference type="HAMAP" id="MF_01810">
    <property type="entry name" value="YidC_type1"/>
    <property type="match status" value="1"/>
</dbReference>
<dbReference type="InterPro" id="IPR019998">
    <property type="entry name" value="Membr_insert_YidC"/>
</dbReference>
<dbReference type="InterPro" id="IPR028053">
    <property type="entry name" value="Membr_insert_YidC_N"/>
</dbReference>
<dbReference type="InterPro" id="IPR001708">
    <property type="entry name" value="YidC/ALB3/OXA1/COX18"/>
</dbReference>
<dbReference type="InterPro" id="IPR028055">
    <property type="entry name" value="YidC/Oxa/ALB_C"/>
</dbReference>
<dbReference type="InterPro" id="IPR047196">
    <property type="entry name" value="YidC_ALB_C"/>
</dbReference>
<dbReference type="InterPro" id="IPR038221">
    <property type="entry name" value="YidC_periplasmic_sf"/>
</dbReference>
<dbReference type="NCBIfam" id="NF002355">
    <property type="entry name" value="PRK01318.2-2"/>
    <property type="match status" value="1"/>
</dbReference>
<dbReference type="NCBIfam" id="TIGR03593">
    <property type="entry name" value="yidC_nterm"/>
    <property type="match status" value="1"/>
</dbReference>
<dbReference type="NCBIfam" id="TIGR03592">
    <property type="entry name" value="yidC_oxa1_cterm"/>
    <property type="match status" value="1"/>
</dbReference>
<dbReference type="PANTHER" id="PTHR12428:SF65">
    <property type="entry name" value="CYTOCHROME C OXIDASE ASSEMBLY PROTEIN COX18, MITOCHONDRIAL"/>
    <property type="match status" value="1"/>
</dbReference>
<dbReference type="PANTHER" id="PTHR12428">
    <property type="entry name" value="OXA1"/>
    <property type="match status" value="1"/>
</dbReference>
<dbReference type="Pfam" id="PF02096">
    <property type="entry name" value="60KD_IMP"/>
    <property type="match status" value="1"/>
</dbReference>
<dbReference type="Pfam" id="PF14849">
    <property type="entry name" value="YidC_periplas"/>
    <property type="match status" value="1"/>
</dbReference>
<dbReference type="PRINTS" id="PR00701">
    <property type="entry name" value="60KDINNERMP"/>
</dbReference>
<dbReference type="PRINTS" id="PR01900">
    <property type="entry name" value="YIDCPROTEIN"/>
</dbReference>
<reference key="1">
    <citation type="journal article" date="2004" name="Proc. Natl. Acad. Sci. U.S.A.">
        <title>Comparison of the genome of the oral pathogen Treponema denticola with other spirochete genomes.</title>
        <authorList>
            <person name="Seshadri R."/>
            <person name="Myers G.S.A."/>
            <person name="Tettelin H."/>
            <person name="Eisen J.A."/>
            <person name="Heidelberg J.F."/>
            <person name="Dodson R.J."/>
            <person name="Davidsen T.M."/>
            <person name="DeBoy R.T."/>
            <person name="Fouts D.E."/>
            <person name="Haft D.H."/>
            <person name="Selengut J."/>
            <person name="Ren Q."/>
            <person name="Brinkac L.M."/>
            <person name="Madupu R."/>
            <person name="Kolonay J.F."/>
            <person name="Durkin S.A."/>
            <person name="Daugherty S.C."/>
            <person name="Shetty J."/>
            <person name="Shvartsbeyn A."/>
            <person name="Gebregeorgis E."/>
            <person name="Geer K."/>
            <person name="Tsegaye G."/>
            <person name="Malek J.A."/>
            <person name="Ayodeji B."/>
            <person name="Shatsman S."/>
            <person name="McLeod M.P."/>
            <person name="Smajs D."/>
            <person name="Howell J.K."/>
            <person name="Pal S."/>
            <person name="Amin A."/>
            <person name="Vashisth P."/>
            <person name="McNeill T.Z."/>
            <person name="Xiang Q."/>
            <person name="Sodergren E."/>
            <person name="Baca E."/>
            <person name="Weinstock G.M."/>
            <person name="Norris S.J."/>
            <person name="Fraser C.M."/>
            <person name="Paulsen I.T."/>
        </authorList>
    </citation>
    <scope>NUCLEOTIDE SEQUENCE [LARGE SCALE GENOMIC DNA]</scope>
    <source>
        <strain>ATCC 35405 / DSM 14222 / CIP 103919 / JCM 8153 / KCTC 15104</strain>
    </source>
</reference>
<feature type="chain" id="PRO_1000070185" description="Membrane protein insertase YidC">
    <location>
        <begin position="1"/>
        <end position="582"/>
    </location>
</feature>
<feature type="transmembrane region" description="Helical" evidence="1">
    <location>
        <begin position="4"/>
        <end position="24"/>
    </location>
</feature>
<feature type="transmembrane region" description="Helical" evidence="1">
    <location>
        <begin position="376"/>
        <end position="396"/>
    </location>
</feature>
<feature type="transmembrane region" description="Helical" evidence="1">
    <location>
        <begin position="446"/>
        <end position="466"/>
    </location>
</feature>
<feature type="transmembrane region" description="Helical" evidence="1">
    <location>
        <begin position="542"/>
        <end position="562"/>
    </location>
</feature>
<sequence>MKKNTVLAVVLSMLVFGGWLYIQQKYFPTEYNVPQKPVAQAQGQNPTSSEIAVQTSSNQISNSMIEAVADSDYPSREQTYVIETDIIRAVFTNKGGDIISYKLKEHASAGSDERVEMIENVTERNRALSLALGGHDAQAVDLLFNVKEESLSDGRKQIGFYRDIKLKNTDGSETVFTLAKRYTFIPGDYMFTLEVTIDGKEGMRGLSFGDSAYTLRSAPQIGPEWDKVNDKYEYRALSYFANEKKKEDRSITDGKTKAVNDLASWVSVSGKYFSFIIIPKDPIQKMFFSGIKEEGAKLHNSQFFISRQPIVGNAAYDQYRVYIGPSSEKILNSYNSAAANNYGYENLRIDSLAASSGFLAPLERVLKFVMEIFYKIIPNWGVALLLLTLLMRIIFFPLTKKSSEATKRMQELQPQINELQQKYKNNPQKLNAEMVKFYKEAGYNPASGCLPLLIQLPFLFAMFGLFNNYFEFRGASFIPGWIPDLSVGDSILKFGFTIPFLNWTDLRLLPIIYTASQLLHGKLTQTPGQSQQNPSMKIMIYFMPLFFFFLFYNAPSGLLLFWTFSNILMLLQQLIINKSMKK</sequence>
<accession>Q73JM1</accession>
<gene>
    <name evidence="1" type="primary">yidC</name>
    <name type="ordered locus">TDE_2396</name>
</gene>
<keyword id="KW-0997">Cell inner membrane</keyword>
<keyword id="KW-1003">Cell membrane</keyword>
<keyword id="KW-0143">Chaperone</keyword>
<keyword id="KW-0472">Membrane</keyword>
<keyword id="KW-0653">Protein transport</keyword>
<keyword id="KW-1185">Reference proteome</keyword>
<keyword id="KW-0812">Transmembrane</keyword>
<keyword id="KW-1133">Transmembrane helix</keyword>
<keyword id="KW-0813">Transport</keyword>
<proteinExistence type="inferred from homology"/>
<name>YIDC_TREDE</name>
<evidence type="ECO:0000255" key="1">
    <source>
        <dbReference type="HAMAP-Rule" id="MF_01810"/>
    </source>
</evidence>
<protein>
    <recommendedName>
        <fullName evidence="1">Membrane protein insertase YidC</fullName>
    </recommendedName>
    <alternativeName>
        <fullName evidence="1">Foldase YidC</fullName>
    </alternativeName>
    <alternativeName>
        <fullName evidence="1">Membrane integrase YidC</fullName>
    </alternativeName>
    <alternativeName>
        <fullName evidence="1">Membrane protein YidC</fullName>
    </alternativeName>
</protein>
<comment type="function">
    <text evidence="1">Required for the insertion and/or proper folding and/or complex formation of integral membrane proteins into the membrane. Involved in integration of membrane proteins that insert both dependently and independently of the Sec translocase complex, as well as at least some lipoproteins. Aids folding of multispanning membrane proteins.</text>
</comment>
<comment type="subunit">
    <text evidence="1">Interacts with the Sec translocase complex via SecD. Specifically interacts with transmembrane segments of nascent integral membrane proteins during membrane integration.</text>
</comment>
<comment type="subcellular location">
    <subcellularLocation>
        <location evidence="1">Cell inner membrane</location>
        <topology evidence="1">Multi-pass membrane protein</topology>
    </subcellularLocation>
</comment>
<comment type="similarity">
    <text evidence="1">Belongs to the OXA1/ALB3/YidC family. Type 1 subfamily.</text>
</comment>